<organism>
    <name type="scientific">Brassica napus</name>
    <name type="common">Rape</name>
    <dbReference type="NCBI Taxonomy" id="3708"/>
    <lineage>
        <taxon>Eukaryota</taxon>
        <taxon>Viridiplantae</taxon>
        <taxon>Streptophyta</taxon>
        <taxon>Embryophyta</taxon>
        <taxon>Tracheophyta</taxon>
        <taxon>Spermatophyta</taxon>
        <taxon>Magnoliopsida</taxon>
        <taxon>eudicotyledons</taxon>
        <taxon>Gunneridae</taxon>
        <taxon>Pentapetalae</taxon>
        <taxon>rosids</taxon>
        <taxon>malvids</taxon>
        <taxon>Brassicales</taxon>
        <taxon>Brassicaceae</taxon>
        <taxon>Brassiceae</taxon>
        <taxon>Brassica</taxon>
    </lineage>
</organism>
<evidence type="ECO:0000256" key="1">
    <source>
        <dbReference type="SAM" id="MobiDB-lite"/>
    </source>
</evidence>
<evidence type="ECO:0000305" key="2"/>
<accession>P41128</accession>
<protein>
    <recommendedName>
        <fullName evidence="2">Large ribosomal subunit protein eL13z</fullName>
    </recommendedName>
    <alternativeName>
        <fullName>60S ribosomal protein L13-1</fullName>
    </alternativeName>
    <alternativeName>
        <fullName>Cold-induced protein C24A</fullName>
    </alternativeName>
</protein>
<dbReference type="EMBL" id="Z22618">
    <property type="protein sequence ID" value="CAA80341.1"/>
    <property type="molecule type" value="mRNA"/>
</dbReference>
<dbReference type="PIR" id="S42553">
    <property type="entry name" value="S42553"/>
</dbReference>
<dbReference type="RefSeq" id="NP_001303228.1">
    <property type="nucleotide sequence ID" value="NM_001316299.1"/>
</dbReference>
<dbReference type="SMR" id="P41128"/>
<dbReference type="EnsemblPlants" id="CDX83063">
    <property type="protein sequence ID" value="CDX83063"/>
    <property type="gene ID" value="GSBRNA2T00138553001"/>
</dbReference>
<dbReference type="GeneID" id="106447867"/>
<dbReference type="Gramene" id="CDX83063">
    <property type="protein sequence ID" value="CDX83063"/>
    <property type="gene ID" value="GSBRNA2T00138553001"/>
</dbReference>
<dbReference type="KEGG" id="bna:106447867"/>
<dbReference type="OMA" id="QISASWT"/>
<dbReference type="OrthoDB" id="1092412at2759"/>
<dbReference type="GO" id="GO:1990904">
    <property type="term" value="C:ribonucleoprotein complex"/>
    <property type="evidence" value="ECO:0007669"/>
    <property type="project" value="UniProtKB-KW"/>
</dbReference>
<dbReference type="GO" id="GO:0005840">
    <property type="term" value="C:ribosome"/>
    <property type="evidence" value="ECO:0007669"/>
    <property type="project" value="UniProtKB-KW"/>
</dbReference>
<dbReference type="GO" id="GO:0003735">
    <property type="term" value="F:structural constituent of ribosome"/>
    <property type="evidence" value="ECO:0007669"/>
    <property type="project" value="InterPro"/>
</dbReference>
<dbReference type="GO" id="GO:0006412">
    <property type="term" value="P:translation"/>
    <property type="evidence" value="ECO:0007669"/>
    <property type="project" value="InterPro"/>
</dbReference>
<dbReference type="FunFam" id="1.20.5.110:FF:000003">
    <property type="entry name" value="60S ribosomal protein L13"/>
    <property type="match status" value="1"/>
</dbReference>
<dbReference type="Gene3D" id="1.20.5.110">
    <property type="match status" value="1"/>
</dbReference>
<dbReference type="HAMAP" id="MF_00499">
    <property type="entry name" value="Ribosomal_eL13"/>
    <property type="match status" value="1"/>
</dbReference>
<dbReference type="InterPro" id="IPR001380">
    <property type="entry name" value="Ribosomal_eL13"/>
</dbReference>
<dbReference type="InterPro" id="IPR018256">
    <property type="entry name" value="Ribosomal_eL13_CS"/>
</dbReference>
<dbReference type="PANTHER" id="PTHR11722">
    <property type="entry name" value="60S RIBOSOMAL PROTEIN L13"/>
    <property type="match status" value="1"/>
</dbReference>
<dbReference type="PANTHER" id="PTHR11722:SF20">
    <property type="entry name" value="60S RIBOSOMAL PROTEIN L13"/>
    <property type="match status" value="1"/>
</dbReference>
<dbReference type="Pfam" id="PF01294">
    <property type="entry name" value="Ribosomal_L13e"/>
    <property type="match status" value="1"/>
</dbReference>
<dbReference type="PROSITE" id="PS01104">
    <property type="entry name" value="RIBOSOMAL_L13E"/>
    <property type="match status" value="1"/>
</dbReference>
<proteinExistence type="evidence at transcript level"/>
<reference key="1">
    <citation type="journal article" date="1993" name="Plant Mol. Biol.">
        <title>Two related, low-temperature-induced genes from Brassica napus are homologous to the human tumour bbc1 (breast basic conserved) gene.</title>
        <authorList>
            <person name="Saez-Vasquez J."/>
            <person name="Raynal M."/>
            <person name="Meza-Basso L."/>
            <person name="Delseny M."/>
        </authorList>
    </citation>
    <scope>NUCLEOTIDE SEQUENCE [MRNA]</scope>
    <source>
        <strain>cv. Samourai</strain>
    </source>
</reference>
<sequence length="206" mass="23633">MKHNNVIPNGHFKKHWQNYVKTWFNQPARKTRRRVARQKKAVKIFPRPTAGPLRPVVHGQTLKYNMKVRTGKGFTLEELKSAGIPKKLAPTIGIAVDHRRKNRSLEGLQSNVQRLKTYKAKLVIFPRRARKVKAGDSTAEELANATQVQGDYMPIVREKHATELVKLTTEMKSVKAFDKIRLERTNKRHAGARAKRAADAEKEEKK</sequence>
<comment type="similarity">
    <text evidence="2">Belongs to the eukaryotic ribosomal protein eL13 family.</text>
</comment>
<name>RL131_BRANA</name>
<feature type="chain" id="PRO_0000192931" description="Large ribosomal subunit protein eL13z">
    <location>
        <begin position="1"/>
        <end position="206"/>
    </location>
</feature>
<feature type="region of interest" description="Disordered" evidence="1">
    <location>
        <begin position="183"/>
        <end position="206"/>
    </location>
</feature>
<feature type="compositionally biased region" description="Basic residues" evidence="1">
    <location>
        <begin position="186"/>
        <end position="195"/>
    </location>
</feature>
<feature type="compositionally biased region" description="Basic and acidic residues" evidence="1">
    <location>
        <begin position="196"/>
        <end position="206"/>
    </location>
</feature>
<keyword id="KW-0687">Ribonucleoprotein</keyword>
<keyword id="KW-0689">Ribosomal protein</keyword>